<gene>
    <name evidence="1" type="primary">aosR</name>
    <name type="ordered locus">ML1166</name>
    <name type="ORF">B1549_C3_236</name>
</gene>
<dbReference type="EMBL" id="U00014">
    <property type="protein sequence ID" value="AAA50897.1"/>
    <property type="status" value="ALT_INIT"/>
    <property type="molecule type" value="Genomic_DNA"/>
</dbReference>
<dbReference type="EMBL" id="AL583921">
    <property type="protein sequence ID" value="CAC31547.1"/>
    <property type="status" value="ALT_INIT"/>
    <property type="molecule type" value="Genomic_DNA"/>
</dbReference>
<dbReference type="PIR" id="H87054">
    <property type="entry name" value="H87054"/>
</dbReference>
<dbReference type="PIR" id="S72795">
    <property type="entry name" value="S72795"/>
</dbReference>
<dbReference type="RefSeq" id="WP_010908175.1">
    <property type="nucleotide sequence ID" value="NC_002677.1"/>
</dbReference>
<dbReference type="STRING" id="272631.gene:17574996"/>
<dbReference type="KEGG" id="mle:ML1166"/>
<dbReference type="Leproma" id="ML1166"/>
<dbReference type="eggNOG" id="ENOG5032Z6K">
    <property type="taxonomic scope" value="Bacteria"/>
</dbReference>
<dbReference type="HOGENOM" id="CLU_087287_3_0_11"/>
<dbReference type="Proteomes" id="UP000000806">
    <property type="component" value="Chromosome"/>
</dbReference>
<dbReference type="InterPro" id="IPR018561">
    <property type="entry name" value="AosR"/>
</dbReference>
<dbReference type="Pfam" id="PF09438">
    <property type="entry name" value="DUF2017"/>
    <property type="match status" value="1"/>
</dbReference>
<protein>
    <recommendedName>
        <fullName evidence="1">Putative oxidative stress regulator AosR</fullName>
    </recommendedName>
</protein>
<feature type="chain" id="PRO_0000103807" description="Putative oxidative stress regulator AosR">
    <location>
        <begin position="1"/>
        <end position="217"/>
    </location>
</feature>
<feature type="short sequence motif" description="CXXXC" evidence="1">
    <location>
        <begin position="5"/>
        <end position="9"/>
    </location>
</feature>
<feature type="disulfide bond" description="Redox-active" evidence="1">
    <location>
        <begin position="5"/>
        <end position="9"/>
    </location>
</feature>
<organism>
    <name type="scientific">Mycobacterium leprae (strain TN)</name>
    <dbReference type="NCBI Taxonomy" id="272631"/>
    <lineage>
        <taxon>Bacteria</taxon>
        <taxon>Bacillati</taxon>
        <taxon>Actinomycetota</taxon>
        <taxon>Actinomycetes</taxon>
        <taxon>Mycobacteriales</taxon>
        <taxon>Mycobacteriaceae</taxon>
        <taxon>Mycobacterium</taxon>
    </lineage>
</organism>
<accession>P53424</accession>
<accession>Q9CC74</accession>
<reference key="1">
    <citation type="submission" date="1994-09" db="EMBL/GenBank/DDBJ databases">
        <authorList>
            <person name="Smith D.R."/>
            <person name="Robison K."/>
        </authorList>
    </citation>
    <scope>NUCLEOTIDE SEQUENCE [GENOMIC DNA]</scope>
</reference>
<reference key="2">
    <citation type="journal article" date="2001" name="Nature">
        <title>Massive gene decay in the leprosy bacillus.</title>
        <authorList>
            <person name="Cole S.T."/>
            <person name="Eiglmeier K."/>
            <person name="Parkhill J."/>
            <person name="James K.D."/>
            <person name="Thomson N.R."/>
            <person name="Wheeler P.R."/>
            <person name="Honore N."/>
            <person name="Garnier T."/>
            <person name="Churcher C.M."/>
            <person name="Harris D.E."/>
            <person name="Mungall K.L."/>
            <person name="Basham D."/>
            <person name="Brown D."/>
            <person name="Chillingworth T."/>
            <person name="Connor R."/>
            <person name="Davies R.M."/>
            <person name="Devlin K."/>
            <person name="Duthoy S."/>
            <person name="Feltwell T."/>
            <person name="Fraser A."/>
            <person name="Hamlin N."/>
            <person name="Holroyd S."/>
            <person name="Hornsby T."/>
            <person name="Jagels K."/>
            <person name="Lacroix C."/>
            <person name="Maclean J."/>
            <person name="Moule S."/>
            <person name="Murphy L.D."/>
            <person name="Oliver K."/>
            <person name="Quail M.A."/>
            <person name="Rajandream M.A."/>
            <person name="Rutherford K.M."/>
            <person name="Rutter S."/>
            <person name="Seeger K."/>
            <person name="Simon S."/>
            <person name="Simmonds M."/>
            <person name="Skelton J."/>
            <person name="Squares R."/>
            <person name="Squares S."/>
            <person name="Stevens K."/>
            <person name="Taylor K."/>
            <person name="Whitehead S."/>
            <person name="Woodward J.R."/>
            <person name="Barrell B.G."/>
        </authorList>
    </citation>
    <scope>NUCLEOTIDE SEQUENCE [LARGE SCALE GENOMIC DNA]</scope>
    <source>
        <strain>TN</strain>
    </source>
</reference>
<comment type="similarity">
    <text evidence="2">Belongs to the AosR family.</text>
</comment>
<comment type="sequence caution" evidence="2">
    <conflict type="erroneous initiation">
        <sequence resource="EMBL-CDS" id="AAA50897"/>
    </conflict>
</comment>
<comment type="sequence caution" evidence="2">
    <conflict type="erroneous initiation">
        <sequence resource="EMBL-CDS" id="CAC31547"/>
    </conflict>
</comment>
<name>AOSR_MYCLE</name>
<proteinExistence type="inferred from homology"/>
<keyword id="KW-1015">Disulfide bond</keyword>
<keyword id="KW-0676">Redox-active center</keyword>
<keyword id="KW-1185">Reference proteome</keyword>
<keyword id="KW-0346">Stress response</keyword>
<keyword id="KW-0804">Transcription</keyword>
<keyword id="KW-0805">Transcription regulation</keyword>
<sequence>MPPVCGRRCSRTGEVRRYPGSFVRKWKRVETANGPRFRSVVAPHEVALLKHLVGALLGLLNERESSSPLDELEVITGIKAGNAQRPEDPTLRRLLPDFYTPDDKDQLDPAALDAVDSLNAALRSLHEPEIVDAKRSAAQQLLDTLPESDGRLELTEASANAWIAAVNDLRLALGVILEIDRPAPERVPAGHPLSVHFDVYQWLTVLQEYLVLALMAT</sequence>
<evidence type="ECO:0000250" key="1">
    <source>
        <dbReference type="UniProtKB" id="P9WM25"/>
    </source>
</evidence>
<evidence type="ECO:0000305" key="2"/>